<feature type="chain" id="PRO_0000443513" description="4,4'-diapolycopene oxygenase">
    <location>
        <begin position="1"/>
        <end position="497"/>
    </location>
</feature>
<evidence type="ECO:0000250" key="1">
    <source>
        <dbReference type="UniProtKB" id="P21685"/>
    </source>
</evidence>
<evidence type="ECO:0000269" key="2">
    <source>
    </source>
</evidence>
<evidence type="ECO:0000303" key="3">
    <source>
    </source>
</evidence>
<evidence type="ECO:0000305" key="4"/>
<evidence type="ECO:0000305" key="5">
    <source>
    </source>
</evidence>
<evidence type="ECO:0000312" key="6">
    <source>
        <dbReference type="EMBL" id="AAX46185.1"/>
    </source>
</evidence>
<reference key="1">
    <citation type="journal article" date="2005" name="Appl. Environ. Microbiol.">
        <title>Novel carotenoid oxidase involved in biosynthesis of 4,4'-diapolycopene dialdehyde.</title>
        <authorList>
            <person name="Tao L."/>
            <person name="Schenzle A."/>
            <person name="Odom J.M."/>
            <person name="Cheng Q."/>
        </authorList>
    </citation>
    <scope>NUCLEOTIDE SEQUENCE [GENOMIC DNA]</scope>
    <scope>FUNCTION</scope>
    <scope>CATALYTIC ACTIVITY</scope>
    <scope>DISRUPTION PHENOTYPE</scope>
    <scope>PATHWAY</scope>
    <scope>SUBSTRATE SPECIFICITY</scope>
    <source>
        <strain evidence="6">16a</strain>
    </source>
</reference>
<keyword id="KW-0125">Carotenoid biosynthesis</keyword>
<keyword id="KW-0274">FAD</keyword>
<keyword id="KW-0285">Flavoprotein</keyword>
<keyword id="KW-0560">Oxidoreductase</keyword>
<sequence>MNSNDNQRVIVIGAGLGGLSAAISLATAGFSVQLIEKNDKVGGKLNIMTKDGFTFDLGPSILTMPHIFEALFTGAGKNMADYVQIQKVEPHWRNFFEDGSVIDLCEDAETQRRELDKLGPGTYAQFQRFLDYSKNLCTETEAGYFAKGLDGFWDLLKFYGPLRSLLSFDVFRSMDQGVRRFISDPKLVEILNYFIKYVGSSPYDAPALMNLLPYIQYHYGLWYVKGGMYGMAQAMEKLAVELGVEIRLDAEVSEIQKQDGRACAVKLANGDVLPADIVVSNMEVIPAMEKLLRSPASELKKMQRFEPSCSGLVLHLGVDRLYPQLAHHNFFYSDHPREHFDAVFKSHRLSDDPTIYLVAPCKTDPAQAPAGCEIIKILPHIPHLDPDKLLTAEDYSALRERVLVKLERMGLTDLRQHIVTEEYWTPLDIQAKYYSNQGSIYGVVADRFKNLGFKAPQRSSELSNLYFVGGSVNPGGGMPMVTLSGQLVRDKIVADLQ</sequence>
<organism>
    <name type="scientific">Methylomonas sp</name>
    <dbReference type="NCBI Taxonomy" id="418"/>
    <lineage>
        <taxon>Bacteria</taxon>
        <taxon>Pseudomonadati</taxon>
        <taxon>Pseudomonadota</taxon>
        <taxon>Gammaproteobacteria</taxon>
        <taxon>Methylococcales</taxon>
        <taxon>Methylococcaceae</taxon>
        <taxon>Methylomonas</taxon>
    </lineage>
</organism>
<gene>
    <name evidence="3" type="primary">crtNb</name>
</gene>
<comment type="function">
    <text evidence="2">Involved in the biosynthesis of C30 carotenoids. Catalyzes the oxidation of the terminal methyl side groups of 4,4'-diapolycopene to yield 4,4'-diapolycopen-4,4'-dial via the aldehyde intermediate 4,4'-diapolycopen-al. Also able to catalyze the oxidation of the terminal methyl side group of 4,4'-diaponeurosporene to form 4,4'-diaponeurosporen-4-al. It has moderate to low activity on the C40 substrates neurosporene and lycopene, and has no detectable activity on zeta-carotene or beta-carotene.</text>
</comment>
<comment type="catalytic activity">
    <reaction evidence="2">
        <text>all-trans-4,4'-diapolycopene + 4 AH2 + 4 O2 = all-trans-4,4'-diapolycopene-4,4'-dial + 4 A + 6 H2O</text>
        <dbReference type="Rhea" id="RHEA:31019"/>
        <dbReference type="ChEBI" id="CHEBI:13193"/>
        <dbReference type="ChEBI" id="CHEBI:15377"/>
        <dbReference type="ChEBI" id="CHEBI:15379"/>
        <dbReference type="ChEBI" id="CHEBI:17499"/>
        <dbReference type="ChEBI" id="CHEBI:62449"/>
        <dbReference type="ChEBI" id="CHEBI:62450"/>
        <dbReference type="EC" id="1.14.99.44"/>
    </reaction>
</comment>
<comment type="catalytic activity">
    <reaction evidence="5">
        <text>all-trans-4,4'-diaponeurosporene + 2 AH2 + 2 O2 = 4,4'-diaponeurosporenal + 2 A + 3 H2O</text>
        <dbReference type="Rhea" id="RHEA:56104"/>
        <dbReference type="ChEBI" id="CHEBI:13193"/>
        <dbReference type="ChEBI" id="CHEBI:15377"/>
        <dbReference type="ChEBI" id="CHEBI:15379"/>
        <dbReference type="ChEBI" id="CHEBI:17499"/>
        <dbReference type="ChEBI" id="CHEBI:62743"/>
        <dbReference type="ChEBI" id="CHEBI:79065"/>
    </reaction>
</comment>
<comment type="cofactor">
    <cofactor evidence="1">
        <name>FAD</name>
        <dbReference type="ChEBI" id="CHEBI:57692"/>
    </cofactor>
</comment>
<comment type="pathway">
    <text evidence="5">Carotenoid biosynthesis.</text>
</comment>
<comment type="disruption phenotype">
    <text evidence="2">Cells lacking this gene accumulate the fully unsaturated C30 carotenoid backbone 4,4'-diapolycopene with some additional less unsaturated intermediates.</text>
</comment>
<comment type="miscellaneous">
    <text evidence="5">CrtNb is not a carotenoid desaturase, in spite of its apparent sequence homology.</text>
</comment>
<comment type="similarity">
    <text evidence="4">Belongs to the carotenoid/retinoid oxidoreductase family.</text>
</comment>
<accession>Q4VKU9</accession>
<name>CRTP_METSP</name>
<dbReference type="EC" id="1.14.99.44" evidence="2"/>
<dbReference type="EC" id="1.14.99.-" evidence="5"/>
<dbReference type="EMBL" id="AY841893">
    <property type="protein sequence ID" value="AAX46185.1"/>
    <property type="molecule type" value="Genomic_DNA"/>
</dbReference>
<dbReference type="SMR" id="Q4VKU9"/>
<dbReference type="BioCyc" id="MetaCyc:MONOMER-16324"/>
<dbReference type="BRENDA" id="1.14.99.44">
    <property type="organism ID" value="3315"/>
</dbReference>
<dbReference type="BRENDA" id="1.2.99.10">
    <property type="organism ID" value="15636"/>
</dbReference>
<dbReference type="GO" id="GO:0016491">
    <property type="term" value="F:oxidoreductase activity"/>
    <property type="evidence" value="ECO:0007669"/>
    <property type="project" value="UniProtKB-KW"/>
</dbReference>
<dbReference type="GO" id="GO:0016117">
    <property type="term" value="P:carotenoid biosynthetic process"/>
    <property type="evidence" value="ECO:0007669"/>
    <property type="project" value="UniProtKB-KW"/>
</dbReference>
<dbReference type="Gene3D" id="3.50.50.60">
    <property type="entry name" value="FAD/NAD(P)-binding domain"/>
    <property type="match status" value="2"/>
</dbReference>
<dbReference type="InterPro" id="IPR002937">
    <property type="entry name" value="Amino_oxidase"/>
</dbReference>
<dbReference type="InterPro" id="IPR014105">
    <property type="entry name" value="Carotenoid/retinoid_OxRdtase"/>
</dbReference>
<dbReference type="InterPro" id="IPR036188">
    <property type="entry name" value="FAD/NAD-bd_sf"/>
</dbReference>
<dbReference type="NCBIfam" id="TIGR02734">
    <property type="entry name" value="crtI_fam"/>
    <property type="match status" value="1"/>
</dbReference>
<dbReference type="PANTHER" id="PTHR43734:SF7">
    <property type="entry name" value="4,4'-DIAPONEUROSPORENE OXYGENASE"/>
    <property type="match status" value="1"/>
</dbReference>
<dbReference type="PANTHER" id="PTHR43734">
    <property type="entry name" value="PHYTOENE DESATURASE"/>
    <property type="match status" value="1"/>
</dbReference>
<dbReference type="Pfam" id="PF01593">
    <property type="entry name" value="Amino_oxidase"/>
    <property type="match status" value="1"/>
</dbReference>
<dbReference type="SUPFAM" id="SSF51905">
    <property type="entry name" value="FAD/NAD(P)-binding domain"/>
    <property type="match status" value="1"/>
</dbReference>
<proteinExistence type="evidence at protein level"/>
<protein>
    <recommendedName>
        <fullName evidence="4">4,4'-diapolycopene oxygenase</fullName>
        <ecNumber evidence="2">1.14.99.44</ecNumber>
    </recommendedName>
    <alternativeName>
        <fullName evidence="3">4,4'-diapolycopene oxidase</fullName>
    </alternativeName>
    <alternativeName>
        <fullName evidence="3">4,4'-diaponeurosporene oxidase</fullName>
    </alternativeName>
    <alternativeName>
        <fullName evidence="3">Carotenoid oxidase</fullName>
    </alternativeName>
    <alternativeName>
        <fullName evidence="3">Diaponeurosporene oxygenase</fullName>
        <ecNumber evidence="5">1.14.99.-</ecNumber>
    </alternativeName>
</protein>